<protein>
    <recommendedName>
        <fullName evidence="1">ATP phosphoribosyltransferase</fullName>
        <shortName evidence="1">ATP-PRT</shortName>
        <shortName evidence="1">ATP-PRTase</shortName>
        <ecNumber evidence="1">2.4.2.17</ecNumber>
    </recommendedName>
</protein>
<organism>
    <name type="scientific">Methylibium petroleiphilum (strain ATCC BAA-1232 / LMG 22953 / PM1)</name>
    <dbReference type="NCBI Taxonomy" id="420662"/>
    <lineage>
        <taxon>Bacteria</taxon>
        <taxon>Pseudomonadati</taxon>
        <taxon>Pseudomonadota</taxon>
        <taxon>Betaproteobacteria</taxon>
        <taxon>Burkholderiales</taxon>
        <taxon>Sphaerotilaceae</taxon>
        <taxon>Methylibium</taxon>
    </lineage>
</organism>
<reference key="1">
    <citation type="journal article" date="2007" name="J. Bacteriol.">
        <title>Whole-genome analysis of the methyl tert-butyl ether-degrading beta-proteobacterium Methylibium petroleiphilum PM1.</title>
        <authorList>
            <person name="Kane S.R."/>
            <person name="Chakicherla A.Y."/>
            <person name="Chain P.S.G."/>
            <person name="Schmidt R."/>
            <person name="Shin M.W."/>
            <person name="Legler T.C."/>
            <person name="Scow K.M."/>
            <person name="Larimer F.W."/>
            <person name="Lucas S.M."/>
            <person name="Richardson P.M."/>
            <person name="Hristova K.R."/>
        </authorList>
    </citation>
    <scope>NUCLEOTIDE SEQUENCE [LARGE SCALE GENOMIC DNA]</scope>
    <source>
        <strain>ATCC BAA-1232 / LMG 22953 / PM1</strain>
    </source>
</reference>
<name>HIS1_METPP</name>
<gene>
    <name evidence="1" type="primary">hisG</name>
    <name type="ordered locus">Mpe_A0830</name>
</gene>
<keyword id="KW-0028">Amino-acid biosynthesis</keyword>
<keyword id="KW-0067">ATP-binding</keyword>
<keyword id="KW-0963">Cytoplasm</keyword>
<keyword id="KW-0328">Glycosyltransferase</keyword>
<keyword id="KW-0368">Histidine biosynthesis</keyword>
<keyword id="KW-0547">Nucleotide-binding</keyword>
<keyword id="KW-1185">Reference proteome</keyword>
<keyword id="KW-0808">Transferase</keyword>
<evidence type="ECO:0000255" key="1">
    <source>
        <dbReference type="HAMAP-Rule" id="MF_01018"/>
    </source>
</evidence>
<dbReference type="EC" id="2.4.2.17" evidence="1"/>
<dbReference type="EMBL" id="CP000555">
    <property type="protein sequence ID" value="ABM93792.1"/>
    <property type="molecule type" value="Genomic_DNA"/>
</dbReference>
<dbReference type="RefSeq" id="WP_011828430.1">
    <property type="nucleotide sequence ID" value="NC_008825.1"/>
</dbReference>
<dbReference type="SMR" id="A2SE03"/>
<dbReference type="STRING" id="420662.Mpe_A0830"/>
<dbReference type="KEGG" id="mpt:Mpe_A0830"/>
<dbReference type="eggNOG" id="COG0040">
    <property type="taxonomic scope" value="Bacteria"/>
</dbReference>
<dbReference type="HOGENOM" id="CLU_038115_2_0_4"/>
<dbReference type="UniPathway" id="UPA00031">
    <property type="reaction ID" value="UER00006"/>
</dbReference>
<dbReference type="Proteomes" id="UP000000366">
    <property type="component" value="Chromosome"/>
</dbReference>
<dbReference type="GO" id="GO:0005737">
    <property type="term" value="C:cytoplasm"/>
    <property type="evidence" value="ECO:0007669"/>
    <property type="project" value="UniProtKB-SubCell"/>
</dbReference>
<dbReference type="GO" id="GO:0005524">
    <property type="term" value="F:ATP binding"/>
    <property type="evidence" value="ECO:0007669"/>
    <property type="project" value="UniProtKB-KW"/>
</dbReference>
<dbReference type="GO" id="GO:0003879">
    <property type="term" value="F:ATP phosphoribosyltransferase activity"/>
    <property type="evidence" value="ECO:0007669"/>
    <property type="project" value="UniProtKB-UniRule"/>
</dbReference>
<dbReference type="GO" id="GO:0000105">
    <property type="term" value="P:L-histidine biosynthetic process"/>
    <property type="evidence" value="ECO:0007669"/>
    <property type="project" value="UniProtKB-UniRule"/>
</dbReference>
<dbReference type="CDD" id="cd13595">
    <property type="entry name" value="PBP2_HisGs"/>
    <property type="match status" value="1"/>
</dbReference>
<dbReference type="FunFam" id="3.40.190.10:FF:000011">
    <property type="entry name" value="ATP phosphoribosyltransferase"/>
    <property type="match status" value="1"/>
</dbReference>
<dbReference type="Gene3D" id="3.40.190.10">
    <property type="entry name" value="Periplasmic binding protein-like II"/>
    <property type="match status" value="2"/>
</dbReference>
<dbReference type="HAMAP" id="MF_01018">
    <property type="entry name" value="HisG_Short"/>
    <property type="match status" value="1"/>
</dbReference>
<dbReference type="InterPro" id="IPR013820">
    <property type="entry name" value="ATP_PRibTrfase_cat"/>
</dbReference>
<dbReference type="InterPro" id="IPR018198">
    <property type="entry name" value="ATP_PRibTrfase_CS"/>
</dbReference>
<dbReference type="InterPro" id="IPR001348">
    <property type="entry name" value="ATP_PRibTrfase_HisG"/>
</dbReference>
<dbReference type="InterPro" id="IPR024893">
    <property type="entry name" value="ATP_PRibTrfase_HisG_short"/>
</dbReference>
<dbReference type="NCBIfam" id="TIGR00070">
    <property type="entry name" value="hisG"/>
    <property type="match status" value="1"/>
</dbReference>
<dbReference type="PANTHER" id="PTHR21403:SF8">
    <property type="entry name" value="ATP PHOSPHORIBOSYLTRANSFERASE"/>
    <property type="match status" value="1"/>
</dbReference>
<dbReference type="PANTHER" id="PTHR21403">
    <property type="entry name" value="ATP PHOSPHORIBOSYLTRANSFERASE ATP-PRTASE"/>
    <property type="match status" value="1"/>
</dbReference>
<dbReference type="Pfam" id="PF01634">
    <property type="entry name" value="HisG"/>
    <property type="match status" value="1"/>
</dbReference>
<dbReference type="SUPFAM" id="SSF53850">
    <property type="entry name" value="Periplasmic binding protein-like II"/>
    <property type="match status" value="1"/>
</dbReference>
<dbReference type="PROSITE" id="PS01316">
    <property type="entry name" value="ATP_P_PHORIBOSYLTR"/>
    <property type="match status" value="1"/>
</dbReference>
<sequence length="214" mass="23186">MSITLALSKGRIFEETLPLLKAAGIEVTEDPETSRKLILPTNRPDVRVVLVRATDVPTYVQHGGADLGVVGLDVLLEHGGQGLYQPLDLRIAKCRMSVAVRADFDYAAAVKQGSRIRVATKYVSVARDHFADKGVHVDLIKLYGSMELAPLTGLADAIVDLVSTGSTLKANHLLEVERIMDISSRLVVNQAALKLKREAIRPLIDAFAAAIPQE</sequence>
<accession>A2SE03</accession>
<comment type="function">
    <text evidence="1">Catalyzes the condensation of ATP and 5-phosphoribose 1-diphosphate to form N'-(5'-phosphoribosyl)-ATP (PR-ATP). Has a crucial role in the pathway because the rate of histidine biosynthesis seems to be controlled primarily by regulation of HisG enzymatic activity.</text>
</comment>
<comment type="catalytic activity">
    <reaction evidence="1">
        <text>1-(5-phospho-beta-D-ribosyl)-ATP + diphosphate = 5-phospho-alpha-D-ribose 1-diphosphate + ATP</text>
        <dbReference type="Rhea" id="RHEA:18473"/>
        <dbReference type="ChEBI" id="CHEBI:30616"/>
        <dbReference type="ChEBI" id="CHEBI:33019"/>
        <dbReference type="ChEBI" id="CHEBI:58017"/>
        <dbReference type="ChEBI" id="CHEBI:73183"/>
        <dbReference type="EC" id="2.4.2.17"/>
    </reaction>
</comment>
<comment type="pathway">
    <text evidence="1">Amino-acid biosynthesis; L-histidine biosynthesis; L-histidine from 5-phospho-alpha-D-ribose 1-diphosphate: step 1/9.</text>
</comment>
<comment type="subunit">
    <text evidence="1">Heteromultimer composed of HisG and HisZ subunits.</text>
</comment>
<comment type="subcellular location">
    <subcellularLocation>
        <location evidence="1">Cytoplasm</location>
    </subcellularLocation>
</comment>
<comment type="domain">
    <text>Lacks the C-terminal regulatory region which is replaced by HisZ.</text>
</comment>
<comment type="similarity">
    <text evidence="1">Belongs to the ATP phosphoribosyltransferase family. Short subfamily.</text>
</comment>
<feature type="chain" id="PRO_0000319528" description="ATP phosphoribosyltransferase">
    <location>
        <begin position="1"/>
        <end position="214"/>
    </location>
</feature>
<proteinExistence type="inferred from homology"/>